<evidence type="ECO:0000255" key="1">
    <source>
        <dbReference type="HAMAP-Rule" id="MF_01653"/>
    </source>
</evidence>
<evidence type="ECO:0000305" key="2"/>
<protein>
    <recommendedName>
        <fullName evidence="1">2,3-dihydroxyphenylpropionate/2,3-dihydroxicinnamic acid 1,2-dioxygenase</fullName>
        <ecNumber evidence="1">1.13.11.16</ecNumber>
    </recommendedName>
    <alternativeName>
        <fullName evidence="1">3-carboxyethylcatechol 2,3-dioxygenase</fullName>
    </alternativeName>
</protein>
<proteinExistence type="inferred from homology"/>
<organism>
    <name type="scientific">Mycolicibacterium smegmatis (strain ATCC 700084 / mc(2)155)</name>
    <name type="common">Mycobacterium smegmatis</name>
    <dbReference type="NCBI Taxonomy" id="246196"/>
    <lineage>
        <taxon>Bacteria</taxon>
        <taxon>Bacillati</taxon>
        <taxon>Actinomycetota</taxon>
        <taxon>Actinomycetes</taxon>
        <taxon>Mycobacteriales</taxon>
        <taxon>Mycobacteriaceae</taxon>
        <taxon>Mycolicibacterium</taxon>
    </lineage>
</organism>
<comment type="function">
    <text evidence="1">Catalyzes the non-heme iron(II)-dependent oxidative cleavage of 2,3-dihydroxyphenylpropionic acid and 2,3-dihydroxicinnamic acid into 2-hydroxy-6-ketononadienedioate and 2-hydroxy-6-ketononatrienedioate, respectively.</text>
</comment>
<comment type="catalytic activity">
    <reaction evidence="1">
        <text>3-(2,3-dihydroxyphenyl)propanoate + O2 = (2Z,4E)-2-hydroxy-6-oxonona-2,4-dienedioate + H(+)</text>
        <dbReference type="Rhea" id="RHEA:23840"/>
        <dbReference type="ChEBI" id="CHEBI:15378"/>
        <dbReference type="ChEBI" id="CHEBI:15379"/>
        <dbReference type="ChEBI" id="CHEBI:46951"/>
        <dbReference type="ChEBI" id="CHEBI:66887"/>
        <dbReference type="EC" id="1.13.11.16"/>
    </reaction>
</comment>
<comment type="catalytic activity">
    <reaction evidence="1">
        <text>(2E)-3-(2,3-dihydroxyphenyl)prop-2-enoate + O2 = (2Z,4E,7E)-2-hydroxy-6-oxonona-2,4,7-trienedioate + H(+)</text>
        <dbReference type="Rhea" id="RHEA:25054"/>
        <dbReference type="ChEBI" id="CHEBI:15378"/>
        <dbReference type="ChEBI" id="CHEBI:15379"/>
        <dbReference type="ChEBI" id="CHEBI:58642"/>
        <dbReference type="ChEBI" id="CHEBI:66888"/>
        <dbReference type="EC" id="1.13.11.16"/>
    </reaction>
</comment>
<comment type="cofactor">
    <cofactor evidence="1">
        <name>Fe(2+)</name>
        <dbReference type="ChEBI" id="CHEBI:29033"/>
    </cofactor>
</comment>
<comment type="pathway">
    <text evidence="1">Aromatic compound metabolism; 3-phenylpropanoate degradation.</text>
</comment>
<comment type="subunit">
    <text evidence="1">Homotetramer.</text>
</comment>
<comment type="similarity">
    <text evidence="1">Belongs to the LigB/MhpB extradiol dioxygenase family.</text>
</comment>
<comment type="sequence caution" evidence="2">
    <conflict type="erroneous initiation">
        <sequence resource="EMBL-CDS" id="ABK71791"/>
    </conflict>
</comment>
<reference key="1">
    <citation type="submission" date="2006-10" db="EMBL/GenBank/DDBJ databases">
        <authorList>
            <person name="Fleischmann R.D."/>
            <person name="Dodson R.J."/>
            <person name="Haft D.H."/>
            <person name="Merkel J.S."/>
            <person name="Nelson W.C."/>
            <person name="Fraser C.M."/>
        </authorList>
    </citation>
    <scope>NUCLEOTIDE SEQUENCE [LARGE SCALE GENOMIC DNA]</scope>
    <source>
        <strain>ATCC 700084 / mc(2)155</strain>
    </source>
</reference>
<reference key="2">
    <citation type="journal article" date="2007" name="Genome Biol.">
        <title>Interrupted coding sequences in Mycobacterium smegmatis: authentic mutations or sequencing errors?</title>
        <authorList>
            <person name="Deshayes C."/>
            <person name="Perrodou E."/>
            <person name="Gallien S."/>
            <person name="Euphrasie D."/>
            <person name="Schaeffer C."/>
            <person name="Van-Dorsselaer A."/>
            <person name="Poch O."/>
            <person name="Lecompte O."/>
            <person name="Reyrat J.-M."/>
        </authorList>
    </citation>
    <scope>NUCLEOTIDE SEQUENCE [LARGE SCALE GENOMIC DNA]</scope>
    <source>
        <strain>ATCC 700084 / mc(2)155</strain>
    </source>
</reference>
<reference key="3">
    <citation type="journal article" date="2009" name="Genome Res.">
        <title>Ortho-proteogenomics: multiple proteomes investigation through orthology and a new MS-based protocol.</title>
        <authorList>
            <person name="Gallien S."/>
            <person name="Perrodou E."/>
            <person name="Carapito C."/>
            <person name="Deshayes C."/>
            <person name="Reyrat J.-M."/>
            <person name="Van Dorsselaer A."/>
            <person name="Poch O."/>
            <person name="Schaeffer C."/>
            <person name="Lecompte O."/>
        </authorList>
    </citation>
    <scope>NUCLEOTIDE SEQUENCE [LARGE SCALE GENOMIC DNA]</scope>
    <source>
        <strain>ATCC 700084 / mc(2)155</strain>
    </source>
</reference>
<name>MHPB_MYCS2</name>
<feature type="chain" id="PRO_0000337655" description="2,3-dihydroxyphenylpropionate/2,3-dihydroxicinnamic acid 1,2-dioxygenase">
    <location>
        <begin position="1"/>
        <end position="313"/>
    </location>
</feature>
<feature type="active site" description="Proton donor" evidence="1">
    <location>
        <position position="115"/>
    </location>
</feature>
<feature type="active site" description="Proton acceptor" evidence="1">
    <location>
        <position position="179"/>
    </location>
</feature>
<dbReference type="EC" id="1.13.11.16" evidence="1"/>
<dbReference type="EMBL" id="CP000480">
    <property type="protein sequence ID" value="ABK71791.1"/>
    <property type="status" value="ALT_INIT"/>
    <property type="molecule type" value="Genomic_DNA"/>
</dbReference>
<dbReference type="EMBL" id="CP001663">
    <property type="protein sequence ID" value="AFP41189.1"/>
    <property type="molecule type" value="Genomic_DNA"/>
</dbReference>
<dbReference type="RefSeq" id="YP_889121.1">
    <property type="nucleotide sequence ID" value="NC_008596.1"/>
</dbReference>
<dbReference type="SMR" id="A0R1T3"/>
<dbReference type="STRING" id="246196.MSMEG_4865"/>
<dbReference type="PaxDb" id="246196-MSMEI_4740"/>
<dbReference type="KEGG" id="msg:MSMEI_4740"/>
<dbReference type="KEGG" id="msm:MSMEG_4865"/>
<dbReference type="PATRIC" id="fig|246196.19.peg.4747"/>
<dbReference type="eggNOG" id="COG3384">
    <property type="taxonomic scope" value="Bacteria"/>
</dbReference>
<dbReference type="OrthoDB" id="8673673at2"/>
<dbReference type="UniPathway" id="UPA00714"/>
<dbReference type="Proteomes" id="UP000000757">
    <property type="component" value="Chromosome"/>
</dbReference>
<dbReference type="Proteomes" id="UP000006158">
    <property type="component" value="Chromosome"/>
</dbReference>
<dbReference type="GO" id="GO:0047070">
    <property type="term" value="F:3-carboxyethylcatechol 2,3-dioxygenase activity"/>
    <property type="evidence" value="ECO:0007669"/>
    <property type="project" value="UniProtKB-UniRule"/>
</dbReference>
<dbReference type="GO" id="GO:0008198">
    <property type="term" value="F:ferrous iron binding"/>
    <property type="evidence" value="ECO:0007669"/>
    <property type="project" value="InterPro"/>
</dbReference>
<dbReference type="GO" id="GO:0019380">
    <property type="term" value="P:3-phenylpropionate catabolic process"/>
    <property type="evidence" value="ECO:0007669"/>
    <property type="project" value="UniProtKB-UniRule"/>
</dbReference>
<dbReference type="CDD" id="cd07365">
    <property type="entry name" value="MhpB_like"/>
    <property type="match status" value="1"/>
</dbReference>
<dbReference type="Gene3D" id="3.40.830.10">
    <property type="entry name" value="LigB-like"/>
    <property type="match status" value="1"/>
</dbReference>
<dbReference type="HAMAP" id="MF_01653">
    <property type="entry name" value="MhpB"/>
    <property type="match status" value="1"/>
</dbReference>
<dbReference type="InterPro" id="IPR023789">
    <property type="entry name" value="DHPP/DHXA_dioxygenase"/>
</dbReference>
<dbReference type="InterPro" id="IPR004183">
    <property type="entry name" value="Xdiol_dOase_suB"/>
</dbReference>
<dbReference type="NCBIfam" id="NF009910">
    <property type="entry name" value="PRK13370.1-4"/>
    <property type="match status" value="1"/>
</dbReference>
<dbReference type="Pfam" id="PF02900">
    <property type="entry name" value="LigB"/>
    <property type="match status" value="1"/>
</dbReference>
<dbReference type="SUPFAM" id="SSF53213">
    <property type="entry name" value="LigB-like"/>
    <property type="match status" value="1"/>
</dbReference>
<gene>
    <name evidence="1" type="primary">mhpB</name>
    <name type="ordered locus">MSMEG_4865</name>
    <name type="ordered locus">MSMEI_4740</name>
</gene>
<accession>A0R1T3</accession>
<accession>I7GE99</accession>
<sequence length="313" mass="33282">MPLALCCMSHSPLLNLPGPSAELLDQITDAIADARKFVEQFDPELVVTFSPDHYNGFFYRLMPPFCIGTAAAGVGDYGTYQGPLPVDADIANACAESLWESGVDIAISTAMDVDHGTVQPLQELFGDATARPVVPIFINSVATPLGPLSRSRALGAAVGTFLATLDKRVLIVGSGGLSHDPPVPTLATAPPAALDRIVHGAPMTPEQRMARQEAVIKAAHDFAHGQSPLRSLNPDWDRSLLEIFDEGRLSDLDGWTNTFITGEGGNSAHEIRTWVAAFAALAAHGEYQTGNHFYRAAPELIAGFAIRTAVPST</sequence>
<keyword id="KW-0058">Aromatic hydrocarbons catabolism</keyword>
<keyword id="KW-0223">Dioxygenase</keyword>
<keyword id="KW-0408">Iron</keyword>
<keyword id="KW-0560">Oxidoreductase</keyword>
<keyword id="KW-1185">Reference proteome</keyword>